<comment type="function">
    <text evidence="2 3 5">Forms an icosahedral capsid with a T=7 symmetry and a 40 nm diameter. The capsid is composed of 72 pentamers linked to each other by disulfide bonds and associated with VP2 or VP3 proteins. Interacts with terminal alpha(2,3)-linked sialic acids on the cell surface to provide virion attachment to target cell. This attachment induces virion internalization predominantly through caveolin-mediated endocytosis. Once attached, the virion is internalized by caveolin-mediated endocytosis and traffics to the endoplasmic reticulum. Inside the endoplasmic reticulum, the protein folding machinery isomerizes VP1 interpentamer disulfide bonds, thereby triggering initial uncoating. Next, the virion uses the endoplasmic reticulum-associated degradation machinery to probably translocate in the cytosol before reaching the nucleus. Nuclear entry of the viral DNA involves the selective exposure and importin recognition of VP2/Vp3 nuclear localization signal. In late phase of infection, neo-synthesized VP1 encapsulates replicated genomic DNA in the nucleus, and participates in rearranging nucleosomes around the viral DNA.</text>
</comment>
<comment type="subunit">
    <text evidence="2">Homomultimer; disulfide-linked. The virus capsid is composed of 72 icosahedral units, each one composed of five disulfide-linked copies of VP1. Interacts with minor capsid proteins VP2 and VP3.</text>
</comment>
<comment type="subcellular location">
    <subcellularLocation>
        <location>Virion</location>
    </subcellularLocation>
    <subcellularLocation>
        <location evidence="2">Host nucleus</location>
    </subcellularLocation>
</comment>
<comment type="alternative products">
    <event type="alternative splicing"/>
    <event type="alternative initiation"/>
    <isoform>
        <id>P03091-1</id>
        <name>VP1</name>
        <sequence type="displayed"/>
    </isoform>
    <isoform>
        <id>P03097-1</id>
        <name>VP2</name>
        <name>Minor capsid protein VP2</name>
        <sequence type="external"/>
    </isoform>
    <isoform>
        <id>P03097-2</id>
        <name>VP3</name>
        <name>Minor capsid protein VP3</name>
        <sequence type="external"/>
    </isoform>
</comment>
<comment type="domain">
    <text evidence="2">A DNA-binding domain overlapping a bipartite nuclear localization signal is present in the N-terminal region of the protein and is required for efficient virus formation.</text>
</comment>
<comment type="domain">
    <text evidence="2">The intrinsically disordered C-terminal arm interacts with neighboring pentamers. The unstructured nature of this region allows to make different interactions depending on the structural context: pentamers present at the 12 icosahedral fivefold axes bind five pentamers, whereas pentamers present at the 60 icosahedral six-fold axes interact with six pentamers.</text>
</comment>
<comment type="miscellaneous">
    <text>The virus attaches to the surface of cells by recognition of oligosaccharides terminating in alpha(2,3)-linked sialic acid. Strains that have Gly-92 (small-plaque strains) can also recognize branched oligosaccharides that carry a second alpha(2,6)-linked sialic acid.</text>
</comment>
<comment type="miscellaneous">
    <molecule>Isoform VP1</molecule>
    <text>Produced by alternative splicing of the late mRNA.</text>
</comment>
<comment type="similarity">
    <text evidence="4">Belongs to the polyomaviruses coat protein VP1 family.</text>
</comment>
<protein>
    <recommendedName>
        <fullName>Major capsid protein VP1</fullName>
    </recommendedName>
    <alternativeName>
        <fullName>Major structural protein VP1</fullName>
    </alternativeName>
</protein>
<evidence type="ECO:0000250" key="1"/>
<evidence type="ECO:0000250" key="2">
    <source>
        <dbReference type="UniProtKB" id="P03087"/>
    </source>
</evidence>
<evidence type="ECO:0000269" key="3">
    <source>
    </source>
</evidence>
<evidence type="ECO:0000305" key="4"/>
<evidence type="ECO:0000305" key="5">
    <source>
    </source>
</evidence>
<organism>
    <name type="scientific">Murine polyomavirus (strain A3)</name>
    <name type="common">MPyV</name>
    <dbReference type="NCBI Taxonomy" id="157703"/>
    <lineage>
        <taxon>Viruses</taxon>
        <taxon>Monodnaviria</taxon>
        <taxon>Shotokuvirae</taxon>
        <taxon>Cossaviricota</taxon>
        <taxon>Papovaviricetes</taxon>
        <taxon>Sepolyvirales</taxon>
        <taxon>Polyomaviridae</taxon>
        <taxon>Alphapolyomavirus</taxon>
        <taxon>Mus musculus polyomavirus 1</taxon>
    </lineage>
</organism>
<keyword id="KW-0024">Alternative initiation</keyword>
<keyword id="KW-0025">Alternative splicing</keyword>
<keyword id="KW-0167">Capsid protein</keyword>
<keyword id="KW-1166">Caveolin-mediated endocytosis of virus by host</keyword>
<keyword id="KW-1015">Disulfide bond</keyword>
<keyword id="KW-1048">Host nucleus</keyword>
<keyword id="KW-0945">Host-virus interaction</keyword>
<keyword id="KW-0426">Late protein</keyword>
<keyword id="KW-0597">Phosphoprotein</keyword>
<keyword id="KW-1145">T=7 icosahedral capsid protein</keyword>
<keyword id="KW-1161">Viral attachment to host cell</keyword>
<keyword id="KW-1162">Viral penetration into host cytoplasm</keyword>
<keyword id="KW-0946">Virion</keyword>
<keyword id="KW-1164">Virus endocytosis by host</keyword>
<keyword id="KW-1160">Virus entry into host cell</keyword>
<dbReference type="EMBL" id="V01151">
    <property type="protein sequence ID" value="CAA24468.1"/>
    <property type="molecule type" value="Genomic_DNA"/>
</dbReference>
<dbReference type="PIR" id="A03629">
    <property type="entry name" value="VVVP13"/>
</dbReference>
<dbReference type="SMR" id="P03091"/>
<dbReference type="GO" id="GO:0042025">
    <property type="term" value="C:host cell nucleus"/>
    <property type="evidence" value="ECO:0007669"/>
    <property type="project" value="UniProtKB-SubCell"/>
</dbReference>
<dbReference type="GO" id="GO:0039620">
    <property type="term" value="C:T=7 icosahedral viral capsid"/>
    <property type="evidence" value="ECO:0007669"/>
    <property type="project" value="UniProtKB-KW"/>
</dbReference>
<dbReference type="GO" id="GO:0005198">
    <property type="term" value="F:structural molecule activity"/>
    <property type="evidence" value="ECO:0007669"/>
    <property type="project" value="InterPro"/>
</dbReference>
<dbReference type="GO" id="GO:0075513">
    <property type="term" value="P:caveolin-mediated endocytosis of virus by host cell"/>
    <property type="evidence" value="ECO:0007669"/>
    <property type="project" value="UniProtKB-KW"/>
</dbReference>
<dbReference type="GO" id="GO:0019062">
    <property type="term" value="P:virion attachment to host cell"/>
    <property type="evidence" value="ECO:0007669"/>
    <property type="project" value="UniProtKB-KW"/>
</dbReference>
<dbReference type="Gene3D" id="2.60.175.10">
    <property type="entry name" value="Capsid protein VP1,Polyomavirus"/>
    <property type="match status" value="1"/>
</dbReference>
<dbReference type="InterPro" id="IPR000662">
    <property type="entry name" value="Capsid_VP1_Polyomavir"/>
</dbReference>
<dbReference type="InterPro" id="IPR011222">
    <property type="entry name" value="dsDNA_vir_gr_I_capsid"/>
</dbReference>
<dbReference type="InterPro" id="IPR036931">
    <property type="entry name" value="Polyomavir_VP1_sf"/>
</dbReference>
<dbReference type="Pfam" id="PF00718">
    <property type="entry name" value="Polyoma_coat"/>
    <property type="match status" value="1"/>
</dbReference>
<dbReference type="PIRSF" id="PIRSF003376">
    <property type="entry name" value="Capsid_VP1_Polyomavir"/>
    <property type="match status" value="1"/>
</dbReference>
<dbReference type="SUPFAM" id="SSF88648">
    <property type="entry name" value="Group I dsDNA viruses"/>
    <property type="match status" value="1"/>
</dbReference>
<sequence length="384" mass="42590">MAPKRKSGVSKCETKCTKACPRPAPVPKLLIKGGMEVLDLVTGPDSVTEIEAFLNPRMGQPPTPESLTEGGQYYGWSRGINLATSDTEDSPENNTLPTWSMAKLQLPMLNEDLTCDTLQMWEAVSVKTEVVGSGSLLDVHGFNKPTDTVNTKVISTPVEGSQYHVFAVGGEPLDLQGLVTDARTKYKEEGVVTIKTITKKDMVNKDQVLNPISKAKLDKDGMYPVEIWHPDPAKNENTRYFGNYTGGTTTPPVLQFTNTLTTVLLDENGVGPLCKGEGLYLSCVDIMGRRVTRNYDVHHWRGLPRYFKITLRKRWVKNPYPMASLISSLFNNMLPQVQGQPMEGENTQVEEVRVYDGTEPVPGDPDMTRYVDRFGKTKTVFPGN</sequence>
<proteinExistence type="inferred from homology"/>
<name>VP1_POVM3</name>
<organismHost>
    <name type="scientific">Mus musculus</name>
    <name type="common">Mouse</name>
    <dbReference type="NCBI Taxonomy" id="10090"/>
</organismHost>
<feature type="initiator methionine" description="Removed; by host" evidence="1">
    <location>
        <position position="1"/>
    </location>
</feature>
<feature type="chain" id="PRO_0000115023" description="Major capsid protein VP1">
    <location>
        <begin position="2"/>
        <end position="384"/>
    </location>
</feature>
<feature type="region of interest" description="C-terminal arm" evidence="2">
    <location>
        <begin position="322"/>
        <end position="384"/>
    </location>
</feature>
<feature type="short sequence motif" description="Bipartite nuclear localization signal" evidence="2">
    <location>
        <begin position="4"/>
        <end position="18"/>
    </location>
</feature>
<feature type="modified residue" description="Phosphothreonine; by host" evidence="1">
    <location>
        <position position="358"/>
    </location>
</feature>
<feature type="disulfide bond" description="Interchain (with C-12)" evidence="1">
    <location>
        <position position="12"/>
    </location>
</feature>
<feature type="disulfide bond" description="Interchain (with C-115)" evidence="1">
    <location>
        <position position="115"/>
    </location>
</feature>
<accession>P03091</accession>
<reference key="1">
    <citation type="journal article" date="1979" name="Cell">
        <title>Nucleotide sequence and genetic organization of the polyoma late region: features common to the polyoma early region and SV40.</title>
        <authorList>
            <person name="Deininger P."/>
            <person name="Esty A."/>
            <person name="LaPorte P."/>
            <person name="Friedmann T."/>
        </authorList>
    </citation>
    <scope>NUCLEOTIDE SEQUENCE [GENOMIC DNA]</scope>
</reference>
<reference key="2">
    <citation type="journal article" date="2006" name="J. Virol.">
        <title>Mouse polyomavirus enters early endosomes, requires their acidic pH for productive infection, and meets transferrin cargo in Rab11-positive endosomes.</title>
        <authorList>
            <person name="Liebl D."/>
            <person name="Difato F."/>
            <person name="Hornikova L."/>
            <person name="Mannova P."/>
            <person name="Stokrova J."/>
            <person name="Forstova J."/>
        </authorList>
    </citation>
    <scope>FUNCTION</scope>
</reference>
<reference key="3">
    <citation type="journal article" date="2009" name="Virology">
        <title>The Polyomaviridae: Contributions of virus structure to our understanding of virus receptors and infectious entry.</title>
        <authorList>
            <person name="Neu U."/>
            <person name="Stehle T."/>
            <person name="Atwood W.J."/>
        </authorList>
    </citation>
    <scope>REVIEW</scope>
</reference>